<dbReference type="EMBL" id="AK005954">
    <property type="protein sequence ID" value="BAB24337.1"/>
    <property type="molecule type" value="mRNA"/>
</dbReference>
<dbReference type="EMBL" id="AK167332">
    <property type="protein sequence ID" value="BAE39434.1"/>
    <property type="molecule type" value="mRNA"/>
</dbReference>
<dbReference type="EMBL" id="BC094628">
    <property type="protein sequence ID" value="AAH94628.1"/>
    <property type="molecule type" value="mRNA"/>
</dbReference>
<dbReference type="CCDS" id="CCDS22481.1">
    <molecule id="Q505B8-1"/>
</dbReference>
<dbReference type="RefSeq" id="NP_001161716.1">
    <molecule id="Q505B8-2"/>
    <property type="nucleotide sequence ID" value="NM_001168244.1"/>
</dbReference>
<dbReference type="RefSeq" id="NP_082230.2">
    <molecule id="Q505B8-1"/>
    <property type="nucleotide sequence ID" value="NM_027954.3"/>
</dbReference>
<dbReference type="SMR" id="Q505B8"/>
<dbReference type="BioGRID" id="214975">
    <property type="interactions" value="9"/>
</dbReference>
<dbReference type="CORUM" id="Q505B8"/>
<dbReference type="FunCoup" id="Q505B8">
    <property type="interactions" value="1309"/>
</dbReference>
<dbReference type="IntAct" id="Q505B8">
    <property type="interactions" value="5"/>
</dbReference>
<dbReference type="STRING" id="10090.ENSMUSP00000131438"/>
<dbReference type="iPTMnet" id="Q505B8"/>
<dbReference type="PhosphoSitePlus" id="Q505B8"/>
<dbReference type="REPRODUCTION-2DPAGE" id="IPI00321051"/>
<dbReference type="PaxDb" id="10090-ENSMUSP00000122159"/>
<dbReference type="ProteomicsDB" id="258785">
    <molecule id="Q505B8-1"/>
</dbReference>
<dbReference type="ProteomicsDB" id="258786">
    <molecule id="Q505B8-2"/>
</dbReference>
<dbReference type="Antibodypedia" id="49860">
    <property type="antibodies" value="74 antibodies from 14 providers"/>
</dbReference>
<dbReference type="DNASU" id="71846"/>
<dbReference type="Ensembl" id="ENSMUST00000136026.8">
    <molecule id="Q505B8-1"/>
    <property type="protein sequence ID" value="ENSMUSP00000122159.2"/>
    <property type="gene ID" value="ENSMUSG00000003824.13"/>
</dbReference>
<dbReference type="GeneID" id="71846"/>
<dbReference type="KEGG" id="mmu:71846"/>
<dbReference type="UCSC" id="uc009mnv.2">
    <molecule id="Q505B8-1"/>
    <property type="organism name" value="mouse"/>
</dbReference>
<dbReference type="AGR" id="MGI:1919096"/>
<dbReference type="CTD" id="256126"/>
<dbReference type="MGI" id="MGI:1919096">
    <property type="gene designation" value="Syce2"/>
</dbReference>
<dbReference type="VEuPathDB" id="HostDB:ENSMUSG00000003824"/>
<dbReference type="eggNOG" id="ENOG502S7EK">
    <property type="taxonomic scope" value="Eukaryota"/>
</dbReference>
<dbReference type="GeneTree" id="ENSGT00390000004872"/>
<dbReference type="HOGENOM" id="CLU_117939_0_0_1"/>
<dbReference type="InParanoid" id="Q505B8"/>
<dbReference type="OMA" id="KVCHTVE"/>
<dbReference type="OrthoDB" id="6142414at2759"/>
<dbReference type="PhylomeDB" id="Q505B8"/>
<dbReference type="TreeFam" id="TF333776"/>
<dbReference type="BioGRID-ORCS" id="71846">
    <property type="hits" value="0 hits in 77 CRISPR screens"/>
</dbReference>
<dbReference type="ChiTaRS" id="Syce2">
    <property type="organism name" value="mouse"/>
</dbReference>
<dbReference type="PRO" id="PR:Q505B8"/>
<dbReference type="Proteomes" id="UP000000589">
    <property type="component" value="Chromosome 8"/>
</dbReference>
<dbReference type="RNAct" id="Q505B8">
    <property type="molecule type" value="protein"/>
</dbReference>
<dbReference type="Bgee" id="ENSMUSG00000003824">
    <property type="expression patterns" value="Expressed in primary oocyte and 237 other cell types or tissues"/>
</dbReference>
<dbReference type="ExpressionAtlas" id="Q505B8">
    <property type="expression patterns" value="baseline and differential"/>
</dbReference>
<dbReference type="GO" id="GO:0000801">
    <property type="term" value="C:central element"/>
    <property type="evidence" value="ECO:0000314"/>
    <property type="project" value="HGNC-UCL"/>
</dbReference>
<dbReference type="GO" id="GO:0005694">
    <property type="term" value="C:chromosome"/>
    <property type="evidence" value="ECO:0000314"/>
    <property type="project" value="UniProtKB"/>
</dbReference>
<dbReference type="GO" id="GO:0005654">
    <property type="term" value="C:nucleoplasm"/>
    <property type="evidence" value="ECO:0000304"/>
    <property type="project" value="Reactome"/>
</dbReference>
<dbReference type="GO" id="GO:0005634">
    <property type="term" value="C:nucleus"/>
    <property type="evidence" value="ECO:0000314"/>
    <property type="project" value="MGI"/>
</dbReference>
<dbReference type="GO" id="GO:0000795">
    <property type="term" value="C:synaptonemal complex"/>
    <property type="evidence" value="ECO:0000250"/>
    <property type="project" value="MGI"/>
</dbReference>
<dbReference type="GO" id="GO:0051301">
    <property type="term" value="P:cell division"/>
    <property type="evidence" value="ECO:0007669"/>
    <property type="project" value="UniProtKB-KW"/>
</dbReference>
<dbReference type="GO" id="GO:0007130">
    <property type="term" value="P:synaptonemal complex assembly"/>
    <property type="evidence" value="ECO:0000305"/>
    <property type="project" value="MGI"/>
</dbReference>
<dbReference type="InterPro" id="IPR034609">
    <property type="entry name" value="Syce2"/>
</dbReference>
<dbReference type="PANTHER" id="PTHR28398">
    <property type="entry name" value="SYNAPTONEMAL COMPLEX CENTRAL ELEMENT PROTEIN 2"/>
    <property type="match status" value="1"/>
</dbReference>
<dbReference type="PANTHER" id="PTHR28398:SF1">
    <property type="entry name" value="SYNAPTONEMAL COMPLEX CENTRAL ELEMENT PROTEIN 2"/>
    <property type="match status" value="1"/>
</dbReference>
<feature type="chain" id="PRO_0000262563" description="Synaptonemal complex central element protein 2">
    <location>
        <begin position="1"/>
        <end position="171"/>
    </location>
</feature>
<feature type="region of interest" description="Disordered" evidence="2">
    <location>
        <begin position="1"/>
        <end position="52"/>
    </location>
</feature>
<feature type="coiled-coil region" evidence="1">
    <location>
        <begin position="52"/>
        <end position="83"/>
    </location>
</feature>
<feature type="coiled-coil region" evidence="1">
    <location>
        <begin position="118"/>
        <end position="146"/>
    </location>
</feature>
<feature type="compositionally biased region" description="Basic and acidic residues" evidence="2">
    <location>
        <begin position="24"/>
        <end position="36"/>
    </location>
</feature>
<feature type="splice variant" id="VSP_021788" description="In isoform 2." evidence="7">
    <location>
        <begin position="1"/>
        <end position="83"/>
    </location>
</feature>
<feature type="sequence conflict" description="In Ref. 1; BAB24337." evidence="8" ref="1">
    <original>E</original>
    <variation>K</variation>
    <location>
        <position position="26"/>
    </location>
</feature>
<evidence type="ECO:0000255" key="1"/>
<evidence type="ECO:0000256" key="2">
    <source>
        <dbReference type="SAM" id="MobiDB-lite"/>
    </source>
</evidence>
<evidence type="ECO:0000269" key="3">
    <source>
    </source>
</evidence>
<evidence type="ECO:0000269" key="4">
    <source>
    </source>
</evidence>
<evidence type="ECO:0000269" key="5">
    <source>
    </source>
</evidence>
<evidence type="ECO:0000303" key="6">
    <source>
    </source>
</evidence>
<evidence type="ECO:0000303" key="7">
    <source>
    </source>
</evidence>
<evidence type="ECO:0000305" key="8"/>
<organism>
    <name type="scientific">Mus musculus</name>
    <name type="common">Mouse</name>
    <dbReference type="NCBI Taxonomy" id="10090"/>
    <lineage>
        <taxon>Eukaryota</taxon>
        <taxon>Metazoa</taxon>
        <taxon>Chordata</taxon>
        <taxon>Craniata</taxon>
        <taxon>Vertebrata</taxon>
        <taxon>Euteleostomi</taxon>
        <taxon>Mammalia</taxon>
        <taxon>Eutheria</taxon>
        <taxon>Euarchontoglires</taxon>
        <taxon>Glires</taxon>
        <taxon>Rodentia</taxon>
        <taxon>Myomorpha</taxon>
        <taxon>Muroidea</taxon>
        <taxon>Muridae</taxon>
        <taxon>Murinae</taxon>
        <taxon>Mus</taxon>
        <taxon>Mus</taxon>
    </lineage>
</organism>
<reference key="1">
    <citation type="journal article" date="2005" name="Science">
        <title>The transcriptional landscape of the mammalian genome.</title>
        <authorList>
            <person name="Carninci P."/>
            <person name="Kasukawa T."/>
            <person name="Katayama S."/>
            <person name="Gough J."/>
            <person name="Frith M.C."/>
            <person name="Maeda N."/>
            <person name="Oyama R."/>
            <person name="Ravasi T."/>
            <person name="Lenhard B."/>
            <person name="Wells C."/>
            <person name="Kodzius R."/>
            <person name="Shimokawa K."/>
            <person name="Bajic V.B."/>
            <person name="Brenner S.E."/>
            <person name="Batalov S."/>
            <person name="Forrest A.R."/>
            <person name="Zavolan M."/>
            <person name="Davis M.J."/>
            <person name="Wilming L.G."/>
            <person name="Aidinis V."/>
            <person name="Allen J.E."/>
            <person name="Ambesi-Impiombato A."/>
            <person name="Apweiler R."/>
            <person name="Aturaliya R.N."/>
            <person name="Bailey T.L."/>
            <person name="Bansal M."/>
            <person name="Baxter L."/>
            <person name="Beisel K.W."/>
            <person name="Bersano T."/>
            <person name="Bono H."/>
            <person name="Chalk A.M."/>
            <person name="Chiu K.P."/>
            <person name="Choudhary V."/>
            <person name="Christoffels A."/>
            <person name="Clutterbuck D.R."/>
            <person name="Crowe M.L."/>
            <person name="Dalla E."/>
            <person name="Dalrymple B.P."/>
            <person name="de Bono B."/>
            <person name="Della Gatta G."/>
            <person name="di Bernardo D."/>
            <person name="Down T."/>
            <person name="Engstrom P."/>
            <person name="Fagiolini M."/>
            <person name="Faulkner G."/>
            <person name="Fletcher C.F."/>
            <person name="Fukushima T."/>
            <person name="Furuno M."/>
            <person name="Futaki S."/>
            <person name="Gariboldi M."/>
            <person name="Georgii-Hemming P."/>
            <person name="Gingeras T.R."/>
            <person name="Gojobori T."/>
            <person name="Green R.E."/>
            <person name="Gustincich S."/>
            <person name="Harbers M."/>
            <person name="Hayashi Y."/>
            <person name="Hensch T.K."/>
            <person name="Hirokawa N."/>
            <person name="Hill D."/>
            <person name="Huminiecki L."/>
            <person name="Iacono M."/>
            <person name="Ikeo K."/>
            <person name="Iwama A."/>
            <person name="Ishikawa T."/>
            <person name="Jakt M."/>
            <person name="Kanapin A."/>
            <person name="Katoh M."/>
            <person name="Kawasawa Y."/>
            <person name="Kelso J."/>
            <person name="Kitamura H."/>
            <person name="Kitano H."/>
            <person name="Kollias G."/>
            <person name="Krishnan S.P."/>
            <person name="Kruger A."/>
            <person name="Kummerfeld S.K."/>
            <person name="Kurochkin I.V."/>
            <person name="Lareau L.F."/>
            <person name="Lazarevic D."/>
            <person name="Lipovich L."/>
            <person name="Liu J."/>
            <person name="Liuni S."/>
            <person name="McWilliam S."/>
            <person name="Madan Babu M."/>
            <person name="Madera M."/>
            <person name="Marchionni L."/>
            <person name="Matsuda H."/>
            <person name="Matsuzawa S."/>
            <person name="Miki H."/>
            <person name="Mignone F."/>
            <person name="Miyake S."/>
            <person name="Morris K."/>
            <person name="Mottagui-Tabar S."/>
            <person name="Mulder N."/>
            <person name="Nakano N."/>
            <person name="Nakauchi H."/>
            <person name="Ng P."/>
            <person name="Nilsson R."/>
            <person name="Nishiguchi S."/>
            <person name="Nishikawa S."/>
            <person name="Nori F."/>
            <person name="Ohara O."/>
            <person name="Okazaki Y."/>
            <person name="Orlando V."/>
            <person name="Pang K.C."/>
            <person name="Pavan W.J."/>
            <person name="Pavesi G."/>
            <person name="Pesole G."/>
            <person name="Petrovsky N."/>
            <person name="Piazza S."/>
            <person name="Reed J."/>
            <person name="Reid J.F."/>
            <person name="Ring B.Z."/>
            <person name="Ringwald M."/>
            <person name="Rost B."/>
            <person name="Ruan Y."/>
            <person name="Salzberg S.L."/>
            <person name="Sandelin A."/>
            <person name="Schneider C."/>
            <person name="Schoenbach C."/>
            <person name="Sekiguchi K."/>
            <person name="Semple C.A."/>
            <person name="Seno S."/>
            <person name="Sessa L."/>
            <person name="Sheng Y."/>
            <person name="Shibata Y."/>
            <person name="Shimada H."/>
            <person name="Shimada K."/>
            <person name="Silva D."/>
            <person name="Sinclair B."/>
            <person name="Sperling S."/>
            <person name="Stupka E."/>
            <person name="Sugiura K."/>
            <person name="Sultana R."/>
            <person name="Takenaka Y."/>
            <person name="Taki K."/>
            <person name="Tammoja K."/>
            <person name="Tan S.L."/>
            <person name="Tang S."/>
            <person name="Taylor M.S."/>
            <person name="Tegner J."/>
            <person name="Teichmann S.A."/>
            <person name="Ueda H.R."/>
            <person name="van Nimwegen E."/>
            <person name="Verardo R."/>
            <person name="Wei C.L."/>
            <person name="Yagi K."/>
            <person name="Yamanishi H."/>
            <person name="Zabarovsky E."/>
            <person name="Zhu S."/>
            <person name="Zimmer A."/>
            <person name="Hide W."/>
            <person name="Bult C."/>
            <person name="Grimmond S.M."/>
            <person name="Teasdale R.D."/>
            <person name="Liu E.T."/>
            <person name="Brusic V."/>
            <person name="Quackenbush J."/>
            <person name="Wahlestedt C."/>
            <person name="Mattick J.S."/>
            <person name="Hume D.A."/>
            <person name="Kai C."/>
            <person name="Sasaki D."/>
            <person name="Tomaru Y."/>
            <person name="Fukuda S."/>
            <person name="Kanamori-Katayama M."/>
            <person name="Suzuki M."/>
            <person name="Aoki J."/>
            <person name="Arakawa T."/>
            <person name="Iida J."/>
            <person name="Imamura K."/>
            <person name="Itoh M."/>
            <person name="Kato T."/>
            <person name="Kawaji H."/>
            <person name="Kawagashira N."/>
            <person name="Kawashima T."/>
            <person name="Kojima M."/>
            <person name="Kondo S."/>
            <person name="Konno H."/>
            <person name="Nakano K."/>
            <person name="Ninomiya N."/>
            <person name="Nishio T."/>
            <person name="Okada M."/>
            <person name="Plessy C."/>
            <person name="Shibata K."/>
            <person name="Shiraki T."/>
            <person name="Suzuki S."/>
            <person name="Tagami M."/>
            <person name="Waki K."/>
            <person name="Watahiki A."/>
            <person name="Okamura-Oho Y."/>
            <person name="Suzuki H."/>
            <person name="Kawai J."/>
            <person name="Hayashizaki Y."/>
        </authorList>
    </citation>
    <scope>NUCLEOTIDE SEQUENCE [LARGE SCALE MRNA] (ISOFORMS 1 AND 2)</scope>
    <source>
        <strain>C57BL/6J</strain>
        <tissue>Placenta</tissue>
        <tissue>Testis</tissue>
    </source>
</reference>
<reference key="2">
    <citation type="journal article" date="2004" name="Genome Res.">
        <title>The status, quality, and expansion of the NIH full-length cDNA project: the Mammalian Gene Collection (MGC).</title>
        <authorList>
            <consortium name="The MGC Project Team"/>
        </authorList>
    </citation>
    <scope>NUCLEOTIDE SEQUENCE [LARGE SCALE MRNA] (ISOFORM 1)</scope>
    <source>
        <tissue>Mammary gland</tissue>
    </source>
</reference>
<reference key="3">
    <citation type="journal article" date="2005" name="J. Cell Sci.">
        <title>Two novel proteins recruited by synaptonemal complex protein 1 (SYCP1) are at the center of meiosis.</title>
        <authorList>
            <person name="Costa Y."/>
            <person name="Speed R."/>
            <person name="Oellinger R."/>
            <person name="Alsheimer M."/>
            <person name="Semple C.A."/>
            <person name="Gautier P."/>
            <person name="Maratou K."/>
            <person name="Novak I."/>
            <person name="Hoeoeg C."/>
            <person name="Benavente R."/>
            <person name="Cooke H.J."/>
        </authorList>
    </citation>
    <scope>FUNCTION</scope>
    <scope>IDENTIFICATION IN A COMPLEX WITH SYCP1 AND SYCE1</scope>
    <scope>INTERACTION WITH SYCP1 AND SYCE1</scope>
    <scope>HOMODIMERIZATION</scope>
    <scope>SUBCELLULAR LOCATION</scope>
    <scope>DEVELOPMENTAL STAGE</scope>
    <scope>TISSUE SPECIFICITY</scope>
</reference>
<reference key="4">
    <citation type="journal article" date="2006" name="J. Cell Sci.">
        <title>Characterization of a novel meiosis-specific protein within the central element of the synaptonemal complex.</title>
        <authorList>
            <person name="Hamer G."/>
            <person name="Gell K."/>
            <person name="Kouznetsova A."/>
            <person name="Novak I."/>
            <person name="Benavente R."/>
            <person name="Hoeoeg C."/>
        </authorList>
    </citation>
    <scope>FUNCTION</scope>
    <scope>SUBCELLULAR LOCATION</scope>
    <scope>INTERACTION WITH TEX12</scope>
</reference>
<reference key="5">
    <citation type="journal article" date="2010" name="Cell">
        <title>A tissue-specific atlas of mouse protein phosphorylation and expression.</title>
        <authorList>
            <person name="Huttlin E.L."/>
            <person name="Jedrychowski M.P."/>
            <person name="Elias J.E."/>
            <person name="Goswami T."/>
            <person name="Rad R."/>
            <person name="Beausoleil S.A."/>
            <person name="Villen J."/>
            <person name="Haas W."/>
            <person name="Sowa M.E."/>
            <person name="Gygi S.P."/>
        </authorList>
    </citation>
    <scope>IDENTIFICATION BY MASS SPECTROMETRY [LARGE SCALE ANALYSIS]</scope>
    <source>
        <tissue>Testis</tissue>
    </source>
</reference>
<reference key="6">
    <citation type="journal article" date="2011" name="PLoS Genet.">
        <title>A novel mouse synaptonemal complex protein is essential for loading of central element proteins, recombination, and fertility.</title>
        <authorList>
            <person name="Schramm S."/>
            <person name="Fraune J."/>
            <person name="Naumann R."/>
            <person name="Hernandez-Hernandez A."/>
            <person name="Hoog C."/>
            <person name="Cooke H.J."/>
            <person name="Alsheimer M."/>
            <person name="Benavente R."/>
        </authorList>
    </citation>
    <scope>INTERACTION WITH SYCE3</scope>
</reference>
<accession>Q505B8</accession>
<accession>Q3TJR1</accession>
<accession>Q9DAC4</accession>
<comment type="function">
    <text evidence="3 4">Major component of the transverse central element of synaptonemal complexes (SCS), formed between homologous chromosomes during meiotic prophase (PubMed:15944401). Requires SYCP1 in order to be incorporated into the central element (PubMed:15944401, PubMed:16968740). May have a role in the synaptonemal complex assembly, stabilization and recombination (PubMed:15944401).</text>
</comment>
<comment type="subunit">
    <text evidence="3 4 5">Homodimer (PubMed:15944401). Found in a complex with SYCP1 and SYCE1 (PubMed:15944401). Interacts with SYCP1 and SYCE1 (PubMed:15944401). Interacts with SYCE3 (PubMed:21637789). Interacts with TEX12 (PubMed:16968740).</text>
</comment>
<comment type="interaction">
    <interactant intactId="EBI-6131573">
        <id>Q505B8</id>
    </interactant>
    <interactant intactId="EBI-6128737">
        <id>B5KM66</id>
        <label>Syce3</label>
    </interactant>
    <organismsDiffer>false</organismsDiffer>
    <experiments>2</experiments>
</comment>
<comment type="subcellular location">
    <subcellularLocation>
        <location evidence="3">Nucleus</location>
    </subcellularLocation>
    <subcellularLocation>
        <location evidence="3 4">Chromosome</location>
    </subcellularLocation>
    <text>Associates with chromatin. In prophase I stage of meiosis, localizes in the transverse central elements of the central region between lateral elements of the synaptonemal complexes. Found only where the chromosome cores are synapsed. Colocalizes with SYCE1 in the central elements.</text>
</comment>
<comment type="alternative products">
    <event type="alternative splicing"/>
    <isoform>
        <id>Q505B8-1</id>
        <name>1</name>
        <sequence type="displayed"/>
    </isoform>
    <isoform>
        <id>Q505B8-2</id>
        <name>2</name>
        <sequence type="described" ref="VSP_021788"/>
    </isoform>
</comment>
<comment type="tissue specificity">
    <text evidence="3">Meiotic cells (at protein level). Expressed in the ovary and testis.</text>
</comment>
<comment type="developmental stage">
    <text evidence="3">Expressed in ovary, embryo, spleen, thymus, brain, kidney, epididymis, heart and liver at 14 dpc and in oocytes at 18 dpc.</text>
</comment>
<comment type="similarity">
    <text evidence="8">Belongs to the SYCE family.</text>
</comment>
<keyword id="KW-0025">Alternative splicing</keyword>
<keyword id="KW-0131">Cell cycle</keyword>
<keyword id="KW-0132">Cell division</keyword>
<keyword id="KW-0158">Chromosome</keyword>
<keyword id="KW-0175">Coiled coil</keyword>
<keyword id="KW-0469">Meiosis</keyword>
<keyword id="KW-0539">Nucleus</keyword>
<keyword id="KW-1185">Reference proteome</keyword>
<name>SYCE2_MOUSE</name>
<sequence length="171" mass="19558">MERHGVAAPPVELKDQEPPAIVESGEHRQSENHEETPGSVAPSASCQLPGPFSSLDSSIETLKKKAQELIENINESRQKDHALMTNFRDSLKMKVSDLTEKLEERMYQVYSHHSKIIQERLQEFTQKMAKINHLEMELKQVCQTVETVYKDLCVQSEVPTCEEQNYKDGEC</sequence>
<protein>
    <recommendedName>
        <fullName>Synaptonemal complex central element protein 2</fullName>
    </recommendedName>
    <alternativeName>
        <fullName evidence="6">Central element synaptonemal complex protein 1</fullName>
    </alternativeName>
</protein>
<proteinExistence type="evidence at protein level"/>
<gene>
    <name type="primary">Syce2</name>
    <name evidence="6" type="synonym">Cesc1</name>
</gene>